<comment type="function">
    <text evidence="1">Forms part of the ribosomal stalk, playing a central role in the interaction of the ribosome with GTP-bound translation factors.</text>
</comment>
<comment type="subunit">
    <text evidence="1">Part of the ribosomal stalk of the 50S ribosomal subunit. The N-terminus interacts with L11 and the large rRNA to form the base of the stalk. The C-terminus forms an elongated spine to which L12 dimers bind in a sequential fashion forming a multimeric L10(L12)X complex.</text>
</comment>
<comment type="similarity">
    <text evidence="1">Belongs to the universal ribosomal protein uL10 family.</text>
</comment>
<gene>
    <name evidence="1" type="primary">rplJ</name>
    <name type="ordered locus">Lm4b_00270</name>
</gene>
<protein>
    <recommendedName>
        <fullName evidence="1">Large ribosomal subunit protein uL10</fullName>
    </recommendedName>
    <alternativeName>
        <fullName evidence="2">50S ribosomal protein L10</fullName>
    </alternativeName>
</protein>
<proteinExistence type="inferred from homology"/>
<name>RL10_LISMC</name>
<feature type="chain" id="PRO_1000205446" description="Large ribosomal subunit protein uL10">
    <location>
        <begin position="1"/>
        <end position="166"/>
    </location>
</feature>
<keyword id="KW-0687">Ribonucleoprotein</keyword>
<keyword id="KW-0689">Ribosomal protein</keyword>
<keyword id="KW-0694">RNA-binding</keyword>
<keyword id="KW-0699">rRNA-binding</keyword>
<dbReference type="EMBL" id="FM242711">
    <property type="protein sequence ID" value="CAS04037.1"/>
    <property type="molecule type" value="Genomic_DNA"/>
</dbReference>
<dbReference type="RefSeq" id="WP_003723030.1">
    <property type="nucleotide sequence ID" value="NC_012488.1"/>
</dbReference>
<dbReference type="SMR" id="C1KYI2"/>
<dbReference type="GeneID" id="93238164"/>
<dbReference type="KEGG" id="lmc:Lm4b_00270"/>
<dbReference type="HOGENOM" id="CLU_092227_2_0_9"/>
<dbReference type="GO" id="GO:0015934">
    <property type="term" value="C:large ribosomal subunit"/>
    <property type="evidence" value="ECO:0007669"/>
    <property type="project" value="InterPro"/>
</dbReference>
<dbReference type="GO" id="GO:0070180">
    <property type="term" value="F:large ribosomal subunit rRNA binding"/>
    <property type="evidence" value="ECO:0007669"/>
    <property type="project" value="UniProtKB-UniRule"/>
</dbReference>
<dbReference type="GO" id="GO:0003735">
    <property type="term" value="F:structural constituent of ribosome"/>
    <property type="evidence" value="ECO:0007669"/>
    <property type="project" value="InterPro"/>
</dbReference>
<dbReference type="GO" id="GO:0006412">
    <property type="term" value="P:translation"/>
    <property type="evidence" value="ECO:0007669"/>
    <property type="project" value="UniProtKB-UniRule"/>
</dbReference>
<dbReference type="CDD" id="cd05797">
    <property type="entry name" value="Ribosomal_L10"/>
    <property type="match status" value="1"/>
</dbReference>
<dbReference type="FunFam" id="3.30.70.1730:FF:000001">
    <property type="entry name" value="50S ribosomal protein L10"/>
    <property type="match status" value="1"/>
</dbReference>
<dbReference type="Gene3D" id="3.30.70.1730">
    <property type="match status" value="1"/>
</dbReference>
<dbReference type="HAMAP" id="MF_00362">
    <property type="entry name" value="Ribosomal_uL10"/>
    <property type="match status" value="1"/>
</dbReference>
<dbReference type="InterPro" id="IPR001790">
    <property type="entry name" value="Ribosomal_uL10"/>
</dbReference>
<dbReference type="InterPro" id="IPR043141">
    <property type="entry name" value="Ribosomal_uL10-like_sf"/>
</dbReference>
<dbReference type="InterPro" id="IPR022973">
    <property type="entry name" value="Ribosomal_uL10_bac"/>
</dbReference>
<dbReference type="InterPro" id="IPR047865">
    <property type="entry name" value="Ribosomal_uL10_bac_type"/>
</dbReference>
<dbReference type="InterPro" id="IPR002363">
    <property type="entry name" value="Ribosomal_uL10_CS_bac"/>
</dbReference>
<dbReference type="NCBIfam" id="NF000955">
    <property type="entry name" value="PRK00099.1-1"/>
    <property type="match status" value="1"/>
</dbReference>
<dbReference type="PANTHER" id="PTHR11560">
    <property type="entry name" value="39S RIBOSOMAL PROTEIN L10, MITOCHONDRIAL"/>
    <property type="match status" value="1"/>
</dbReference>
<dbReference type="Pfam" id="PF00466">
    <property type="entry name" value="Ribosomal_L10"/>
    <property type="match status" value="1"/>
</dbReference>
<dbReference type="SUPFAM" id="SSF160369">
    <property type="entry name" value="Ribosomal protein L10-like"/>
    <property type="match status" value="1"/>
</dbReference>
<dbReference type="PROSITE" id="PS01109">
    <property type="entry name" value="RIBOSOMAL_L10"/>
    <property type="match status" value="1"/>
</dbReference>
<accession>C1KYI2</accession>
<reference key="1">
    <citation type="journal article" date="2012" name="BMC Genomics">
        <title>Comparative genomics and transcriptomics of lineages I, II, and III strains of Listeria monocytogenes.</title>
        <authorList>
            <person name="Hain T."/>
            <person name="Ghai R."/>
            <person name="Billion A."/>
            <person name="Kuenne C.T."/>
            <person name="Steinweg C."/>
            <person name="Izar B."/>
            <person name="Mohamed W."/>
            <person name="Mraheil M."/>
            <person name="Domann E."/>
            <person name="Schaffrath S."/>
            <person name="Karst U."/>
            <person name="Goesmann A."/>
            <person name="Oehm S."/>
            <person name="Puhler A."/>
            <person name="Merkl R."/>
            <person name="Vorwerk S."/>
            <person name="Glaser P."/>
            <person name="Garrido P."/>
            <person name="Rusniok C."/>
            <person name="Buchrieser C."/>
            <person name="Goebel W."/>
            <person name="Chakraborty T."/>
        </authorList>
    </citation>
    <scope>NUCLEOTIDE SEQUENCE [LARGE SCALE GENOMIC DNA]</scope>
    <source>
        <strain>CLIP80459</strain>
    </source>
</reference>
<sequence>MSKVLEAKQSAVEEIKTKLSASASTVIVDYRGLNVGEITELRKQLRDAGIEFKVYKNSLTRRAVEANGYEGLEGALTGPNAIAFSNEDVVAPAKILNDFAKDHEALEIKAGVIEGKVASLEEIKALATLPSREGLLSMLCNVLQAPVRGLAIATKAVADQKEGQEA</sequence>
<evidence type="ECO:0000255" key="1">
    <source>
        <dbReference type="HAMAP-Rule" id="MF_00362"/>
    </source>
</evidence>
<evidence type="ECO:0000305" key="2"/>
<organism>
    <name type="scientific">Listeria monocytogenes serotype 4b (strain CLIP80459)</name>
    <dbReference type="NCBI Taxonomy" id="568819"/>
    <lineage>
        <taxon>Bacteria</taxon>
        <taxon>Bacillati</taxon>
        <taxon>Bacillota</taxon>
        <taxon>Bacilli</taxon>
        <taxon>Bacillales</taxon>
        <taxon>Listeriaceae</taxon>
        <taxon>Listeria</taxon>
    </lineage>
</organism>